<accession>A6MMW4</accession>
<feature type="chain" id="PRO_0000354151" description="Photosystem I reaction center subunit IX">
    <location>
        <begin position="1"/>
        <end position="44"/>
    </location>
</feature>
<feature type="transmembrane region" description="Helical" evidence="1">
    <location>
        <begin position="7"/>
        <end position="27"/>
    </location>
</feature>
<evidence type="ECO:0000255" key="1">
    <source>
        <dbReference type="HAMAP-Rule" id="MF_00522"/>
    </source>
</evidence>
<reference key="1">
    <citation type="journal article" date="2007" name="Mol. Phylogenet. Evol.">
        <title>Phylogenetic and evolutionary implications of complete chloroplast genome sequences of four early-diverging angiosperms: Buxus (Buxaceae), Chloranthus (Chloranthaceae), Dioscorea (Dioscoreaceae), and Illicium (Schisandraceae).</title>
        <authorList>
            <person name="Hansen D.R."/>
            <person name="Dastidar S.G."/>
            <person name="Cai Z."/>
            <person name="Penaflor C."/>
            <person name="Kuehl J.V."/>
            <person name="Boore J.L."/>
            <person name="Jansen R.K."/>
        </authorList>
    </citation>
    <scope>NUCLEOTIDE SEQUENCE [LARGE SCALE GENOMIC DNA]</scope>
</reference>
<comment type="function">
    <text evidence="1">May help in the organization of the PsaE and PsaF subunits.</text>
</comment>
<comment type="subcellular location">
    <subcellularLocation>
        <location evidence="1">Plastid</location>
        <location evidence="1">Chloroplast thylakoid membrane</location>
        <topology evidence="1">Single-pass membrane protein</topology>
    </subcellularLocation>
</comment>
<comment type="similarity">
    <text evidence="1">Belongs to the PsaJ family.</text>
</comment>
<dbReference type="EMBL" id="EF380354">
    <property type="protein sequence ID" value="ABQ52539.1"/>
    <property type="molecule type" value="Genomic_DNA"/>
</dbReference>
<dbReference type="RefSeq" id="YP_001294290.1">
    <property type="nucleotide sequence ID" value="NC_009600.1"/>
</dbReference>
<dbReference type="SMR" id="A6MMW4"/>
<dbReference type="GeneID" id="5236775"/>
<dbReference type="GO" id="GO:0009535">
    <property type="term" value="C:chloroplast thylakoid membrane"/>
    <property type="evidence" value="ECO:0007669"/>
    <property type="project" value="UniProtKB-SubCell"/>
</dbReference>
<dbReference type="GO" id="GO:0009522">
    <property type="term" value="C:photosystem I"/>
    <property type="evidence" value="ECO:0007669"/>
    <property type="project" value="UniProtKB-KW"/>
</dbReference>
<dbReference type="GO" id="GO:0015979">
    <property type="term" value="P:photosynthesis"/>
    <property type="evidence" value="ECO:0007669"/>
    <property type="project" value="UniProtKB-UniRule"/>
</dbReference>
<dbReference type="FunFam" id="1.20.5.510:FF:000001">
    <property type="entry name" value="Photosystem I reaction center subunit IX"/>
    <property type="match status" value="1"/>
</dbReference>
<dbReference type="Gene3D" id="1.20.5.510">
    <property type="entry name" value="Single helix bin"/>
    <property type="match status" value="1"/>
</dbReference>
<dbReference type="HAMAP" id="MF_00522">
    <property type="entry name" value="PSI_PsaJ"/>
    <property type="match status" value="1"/>
</dbReference>
<dbReference type="InterPro" id="IPR002615">
    <property type="entry name" value="PSI_PsaJ"/>
</dbReference>
<dbReference type="InterPro" id="IPR036062">
    <property type="entry name" value="PSI_PsaJ_sf"/>
</dbReference>
<dbReference type="PANTHER" id="PTHR36082">
    <property type="match status" value="1"/>
</dbReference>
<dbReference type="PANTHER" id="PTHR36082:SF2">
    <property type="entry name" value="PHOTOSYSTEM I REACTION CENTER SUBUNIT IX"/>
    <property type="match status" value="1"/>
</dbReference>
<dbReference type="Pfam" id="PF01701">
    <property type="entry name" value="PSI_PsaJ"/>
    <property type="match status" value="1"/>
</dbReference>
<dbReference type="SUPFAM" id="SSF81544">
    <property type="entry name" value="Subunit IX of photosystem I reaction centre, PsaJ"/>
    <property type="match status" value="1"/>
</dbReference>
<gene>
    <name evidence="1" type="primary">psaJ</name>
</gene>
<organism>
    <name type="scientific">Illicium oligandrum</name>
    <name type="common">Star anise</name>
    <dbReference type="NCBI Taxonomy" id="145286"/>
    <lineage>
        <taxon>Eukaryota</taxon>
        <taxon>Viridiplantae</taxon>
        <taxon>Streptophyta</taxon>
        <taxon>Embryophyta</taxon>
        <taxon>Tracheophyta</taxon>
        <taxon>Spermatophyta</taxon>
        <taxon>Magnoliopsida</taxon>
        <taxon>Austrobaileyales</taxon>
        <taxon>Schisandraceae</taxon>
        <taxon>Illicium</taxon>
    </lineage>
</organism>
<name>PSAJ_ILLOL</name>
<sequence length="44" mass="4962">MRNIKTYLSVAPVLATLWFGSLAGLLIEINRLFPDALAFPFFSF</sequence>
<geneLocation type="chloroplast"/>
<protein>
    <recommendedName>
        <fullName evidence="1">Photosystem I reaction center subunit IX</fullName>
    </recommendedName>
    <alternativeName>
        <fullName evidence="1">PSI-J</fullName>
    </alternativeName>
</protein>
<proteinExistence type="inferred from homology"/>
<keyword id="KW-0150">Chloroplast</keyword>
<keyword id="KW-0472">Membrane</keyword>
<keyword id="KW-0602">Photosynthesis</keyword>
<keyword id="KW-0603">Photosystem I</keyword>
<keyword id="KW-0934">Plastid</keyword>
<keyword id="KW-0793">Thylakoid</keyword>
<keyword id="KW-0812">Transmembrane</keyword>
<keyword id="KW-1133">Transmembrane helix</keyword>